<keyword id="KW-0961">Cell wall biogenesis/degradation</keyword>
<keyword id="KW-1185">Reference proteome</keyword>
<gene>
    <name type="primary">ECM9</name>
    <name type="ordered locus">YKR004C</name>
    <name type="ORF">YK103</name>
    <name type="ORF">YKR004C-A</name>
</gene>
<dbReference type="EMBL" id="X65124">
    <property type="protein sequence ID" value="CAA46248.1"/>
    <property type="status" value="ALT_SEQ"/>
    <property type="molecule type" value="Genomic_DNA"/>
</dbReference>
<dbReference type="EMBL" id="Z28229">
    <property type="protein sequence ID" value="CAA82074.1"/>
    <property type="status" value="ALT_SEQ"/>
    <property type="molecule type" value="Genomic_DNA"/>
</dbReference>
<dbReference type="EMBL" id="AY245792">
    <property type="protein sequence ID" value="AAP04342.1"/>
    <property type="molecule type" value="mRNA"/>
</dbReference>
<dbReference type="EMBL" id="BK006944">
    <property type="protein sequence ID" value="DAA09160.1"/>
    <property type="molecule type" value="Genomic_DNA"/>
</dbReference>
<dbReference type="PIR" id="S25818">
    <property type="entry name" value="S25818"/>
</dbReference>
<dbReference type="RefSeq" id="NP_012929.4">
    <property type="nucleotide sequence ID" value="NM_001179794.3"/>
</dbReference>
<dbReference type="SMR" id="Q02202"/>
<dbReference type="BioGRID" id="34136">
    <property type="interactions" value="20"/>
</dbReference>
<dbReference type="FunCoup" id="Q02202">
    <property type="interactions" value="29"/>
</dbReference>
<dbReference type="IntAct" id="Q02202">
    <property type="interactions" value="2"/>
</dbReference>
<dbReference type="STRING" id="4932.YKR004C"/>
<dbReference type="iPTMnet" id="Q02202"/>
<dbReference type="PaxDb" id="4932-YKR004C"/>
<dbReference type="PeptideAtlas" id="Q02202"/>
<dbReference type="EnsemblFungi" id="YKR004C_mRNA">
    <property type="protein sequence ID" value="YKR004C"/>
    <property type="gene ID" value="YKR004C"/>
</dbReference>
<dbReference type="GeneID" id="853873"/>
<dbReference type="KEGG" id="sce:YKR004C"/>
<dbReference type="AGR" id="SGD:S000001712"/>
<dbReference type="SGD" id="S000001712">
    <property type="gene designation" value="ECM9"/>
</dbReference>
<dbReference type="VEuPathDB" id="FungiDB:YKR004C"/>
<dbReference type="eggNOG" id="ENOG502RXS6">
    <property type="taxonomic scope" value="Eukaryota"/>
</dbReference>
<dbReference type="HOGENOM" id="CLU_062497_0_0_1"/>
<dbReference type="InParanoid" id="Q02202"/>
<dbReference type="OMA" id="NYYCWNT"/>
<dbReference type="OrthoDB" id="5358702at2759"/>
<dbReference type="BioCyc" id="YEAST:G3O-31982-MONOMER"/>
<dbReference type="BioGRID-ORCS" id="853873">
    <property type="hits" value="0 hits in 10 CRISPR screens"/>
</dbReference>
<dbReference type="PRO" id="PR:Q02202"/>
<dbReference type="Proteomes" id="UP000002311">
    <property type="component" value="Chromosome XI"/>
</dbReference>
<dbReference type="RNAct" id="Q02202">
    <property type="molecule type" value="protein"/>
</dbReference>
<dbReference type="GO" id="GO:0005737">
    <property type="term" value="C:cytoplasm"/>
    <property type="evidence" value="ECO:0000318"/>
    <property type="project" value="GO_Central"/>
</dbReference>
<dbReference type="GO" id="GO:0005968">
    <property type="term" value="C:Rab-protein geranylgeranyltransferase complex"/>
    <property type="evidence" value="ECO:0000318"/>
    <property type="project" value="GO_Central"/>
</dbReference>
<dbReference type="GO" id="GO:0071555">
    <property type="term" value="P:cell wall organization"/>
    <property type="evidence" value="ECO:0000315"/>
    <property type="project" value="SGD"/>
</dbReference>
<dbReference type="GO" id="GO:0006888">
    <property type="term" value="P:endoplasmic reticulum to Golgi vesicle-mediated transport"/>
    <property type="evidence" value="ECO:0000318"/>
    <property type="project" value="GO_Central"/>
</dbReference>
<dbReference type="Gene3D" id="1.25.40.120">
    <property type="entry name" value="Protein prenylyltransferase"/>
    <property type="match status" value="1"/>
</dbReference>
<dbReference type="PANTHER" id="PTHR11129:SF8">
    <property type="entry name" value="PROTEIN ECM9"/>
    <property type="match status" value="1"/>
</dbReference>
<dbReference type="PANTHER" id="PTHR11129">
    <property type="entry name" value="PROTEIN FARNESYLTRANSFERASE ALPHA SUBUNIT/RAB GERANYLGERANYL TRANSFERASE ALPHA SUBUNIT"/>
    <property type="match status" value="1"/>
</dbReference>
<dbReference type="SUPFAM" id="SSF48439">
    <property type="entry name" value="Protein prenylyltransferase"/>
    <property type="match status" value="1"/>
</dbReference>
<evidence type="ECO:0000269" key="1">
    <source>
    </source>
</evidence>
<evidence type="ECO:0000305" key="2"/>
<comment type="function">
    <text>May be involved in cell wall organization and biogenesis.</text>
</comment>
<comment type="miscellaneous">
    <text evidence="1">Present with 846 molecules/cell in log phase SD medium.</text>
</comment>
<comment type="sequence caution" evidence="2">
    <conflict type="erroneous gene model prediction">
        <sequence resource="EMBL-CDS" id="CAA46248"/>
    </conflict>
</comment>
<comment type="sequence caution" evidence="2">
    <conflict type="erroneous gene model prediction">
        <sequence resource="EMBL-CDS" id="CAA82074"/>
    </conflict>
</comment>
<accession>Q02202</accession>
<accession>D6VXU0</accession>
<accession>Q870H4</accession>
<feature type="chain" id="PRO_0000086925" description="Protein ECM9">
    <location>
        <begin position="1"/>
        <end position="377"/>
    </location>
</feature>
<protein>
    <recommendedName>
        <fullName>Protein ECM9</fullName>
    </recommendedName>
    <alternativeName>
        <fullName>Extracellular mutant protein 9</fullName>
    </alternativeName>
</protein>
<sequence length="377" mass="44583">MQSSLPLCREFFEKITAYLDYHDFRLTITANQPSITLPYYVDEKAHSIELIIFKTTFLSLFQEAHTYFNKTFSDQSGISNENIYYMTVGFLLTTPENKTVYNVHEDLLKRYFQDNSVLVIPDLLVKEVRLIQRLLCSSNNRINKSSSLWILYRKLFVLSLDANTLVLPDILFVFHSSGSQHFSNYYCWNTARWFYDNLPYNKRIELFNLTKRFCFQNVKDCSSWSALAYMVCQQEEKKTDNIRDFQRLTSSFNVPFKINKVDLNFQVQPADAFTQELVKWIDRTYAADWPPYLCLLQITKFNITLRIEMDSVLLTWRNEILNFEENSGHIKMINNTPIVPEKFSNDLLTSVNFAHFGYKKLFLNKFLDKNKKEQSDS</sequence>
<name>ECM9_YEAST</name>
<proteinExistence type="evidence at protein level"/>
<organism>
    <name type="scientific">Saccharomyces cerevisiae (strain ATCC 204508 / S288c)</name>
    <name type="common">Baker's yeast</name>
    <dbReference type="NCBI Taxonomy" id="559292"/>
    <lineage>
        <taxon>Eukaryota</taxon>
        <taxon>Fungi</taxon>
        <taxon>Dikarya</taxon>
        <taxon>Ascomycota</taxon>
        <taxon>Saccharomycotina</taxon>
        <taxon>Saccharomycetes</taxon>
        <taxon>Saccharomycetales</taxon>
        <taxon>Saccharomycetaceae</taxon>
        <taxon>Saccharomyces</taxon>
    </lineage>
</organism>
<reference key="1">
    <citation type="journal article" date="1992" name="Yeast">
        <title>DNA sequencing and analysis of a 24.7 kb segment encompassing centromere CEN11 of Saccharomyces cerevisiae reveals nine previously unknown open reading frames.</title>
        <authorList>
            <person name="Duesterhoeft A."/>
            <person name="Philippsen P."/>
        </authorList>
    </citation>
    <scope>NUCLEOTIDE SEQUENCE [GENOMIC DNA]</scope>
    <source>
        <strain>ATCC 204508 / S288c</strain>
    </source>
</reference>
<reference key="2">
    <citation type="journal article" date="1994" name="Nature">
        <title>Complete DNA sequence of yeast chromosome XI.</title>
        <authorList>
            <person name="Dujon B."/>
            <person name="Alexandraki D."/>
            <person name="Andre B."/>
            <person name="Ansorge W."/>
            <person name="Baladron V."/>
            <person name="Ballesta J.P.G."/>
            <person name="Banrevi A."/>
            <person name="Bolle P.-A."/>
            <person name="Bolotin-Fukuhara M."/>
            <person name="Bossier P."/>
            <person name="Bou G."/>
            <person name="Boyer J."/>
            <person name="Buitrago M.J."/>
            <person name="Cheret G."/>
            <person name="Colleaux L."/>
            <person name="Daignan-Fornier B."/>
            <person name="del Rey F."/>
            <person name="Dion C."/>
            <person name="Domdey H."/>
            <person name="Duesterhoeft A."/>
            <person name="Duesterhus S."/>
            <person name="Entian K.-D."/>
            <person name="Erfle H."/>
            <person name="Esteban P.F."/>
            <person name="Feldmann H."/>
            <person name="Fernandes L."/>
            <person name="Fobo G.M."/>
            <person name="Fritz C."/>
            <person name="Fukuhara H."/>
            <person name="Gabel C."/>
            <person name="Gaillon L."/>
            <person name="Garcia-Cantalejo J.M."/>
            <person name="Garcia-Ramirez J.J."/>
            <person name="Gent M.E."/>
            <person name="Ghazvini M."/>
            <person name="Goffeau A."/>
            <person name="Gonzalez A."/>
            <person name="Grothues D."/>
            <person name="Guerreiro P."/>
            <person name="Hegemann J.H."/>
            <person name="Hewitt N."/>
            <person name="Hilger F."/>
            <person name="Hollenberg C.P."/>
            <person name="Horaitis O."/>
            <person name="Indge K.J."/>
            <person name="Jacquier A."/>
            <person name="James C.M."/>
            <person name="Jauniaux J.-C."/>
            <person name="Jimenez A."/>
            <person name="Keuchel H."/>
            <person name="Kirchrath L."/>
            <person name="Kleine K."/>
            <person name="Koetter P."/>
            <person name="Legrain P."/>
            <person name="Liebl S."/>
            <person name="Louis E.J."/>
            <person name="Maia e Silva A."/>
            <person name="Marck C."/>
            <person name="Monnier A.-L."/>
            <person name="Moestl D."/>
            <person name="Mueller S."/>
            <person name="Obermaier B."/>
            <person name="Oliver S.G."/>
            <person name="Pallier C."/>
            <person name="Pascolo S."/>
            <person name="Pfeiffer F."/>
            <person name="Philippsen P."/>
            <person name="Planta R.J."/>
            <person name="Pohl F.M."/>
            <person name="Pohl T.M."/>
            <person name="Poehlmann R."/>
            <person name="Portetelle D."/>
            <person name="Purnelle B."/>
            <person name="Puzos V."/>
            <person name="Ramezani Rad M."/>
            <person name="Rasmussen S.W."/>
            <person name="Remacha M.A."/>
            <person name="Revuelta J.L."/>
            <person name="Richard G.-F."/>
            <person name="Rieger M."/>
            <person name="Rodrigues-Pousada C."/>
            <person name="Rose M."/>
            <person name="Rupp T."/>
            <person name="Santos M.A."/>
            <person name="Schwager C."/>
            <person name="Sensen C."/>
            <person name="Skala J."/>
            <person name="Soares H."/>
            <person name="Sor F."/>
            <person name="Stegemann J."/>
            <person name="Tettelin H."/>
            <person name="Thierry A."/>
            <person name="Tzermia M."/>
            <person name="Urrestarazu L.A."/>
            <person name="van Dyck L."/>
            <person name="van Vliet-Reedijk J.C."/>
            <person name="Valens M."/>
            <person name="Vandenbol M."/>
            <person name="Vilela C."/>
            <person name="Vissers S."/>
            <person name="von Wettstein D."/>
            <person name="Voss H."/>
            <person name="Wiemann S."/>
            <person name="Xu G."/>
            <person name="Zimmermann J."/>
            <person name="Haasemann M."/>
            <person name="Becker I."/>
            <person name="Mewes H.-W."/>
        </authorList>
    </citation>
    <scope>NUCLEOTIDE SEQUENCE [LARGE SCALE GENOMIC DNA]</scope>
    <source>
        <strain>ATCC 204508 / S288c</strain>
    </source>
</reference>
<reference key="3">
    <citation type="journal article" date="2014" name="G3 (Bethesda)">
        <title>The reference genome sequence of Saccharomyces cerevisiae: Then and now.</title>
        <authorList>
            <person name="Engel S.R."/>
            <person name="Dietrich F.S."/>
            <person name="Fisk D.G."/>
            <person name="Binkley G."/>
            <person name="Balakrishnan R."/>
            <person name="Costanzo M.C."/>
            <person name="Dwight S.S."/>
            <person name="Hitz B.C."/>
            <person name="Karra K."/>
            <person name="Nash R.S."/>
            <person name="Weng S."/>
            <person name="Wong E.D."/>
            <person name="Lloyd P."/>
            <person name="Skrzypek M.S."/>
            <person name="Miyasato S.R."/>
            <person name="Simison M."/>
            <person name="Cherry J.M."/>
        </authorList>
    </citation>
    <scope>GENOME REANNOTATION</scope>
    <source>
        <strain>ATCC 204508 / S288c</strain>
    </source>
</reference>
<reference key="4">
    <citation type="submission" date="2003-02" db="EMBL/GenBank/DDBJ databases">
        <title>Saccharomyces cerevisiae YKR004C (ECM9) mRNA.</title>
        <authorList>
            <person name="Zhang Z."/>
            <person name="Dietrich F.S."/>
        </authorList>
    </citation>
    <scope>NUCLEOTIDE SEQUENCE [MRNA] OF 1-235</scope>
    <source>
        <strain>ATCC 204508 / S288c</strain>
    </source>
</reference>
<reference key="5">
    <citation type="journal article" date="1997" name="Genetics">
        <title>Large scale identification of genes involved in cell surface biosynthesis and architecture in Saccharomyces cerevisiae.</title>
        <authorList>
            <person name="Lussier M."/>
            <person name="White A.-M."/>
            <person name="Sheraton J."/>
            <person name="di Paolo T."/>
            <person name="Treadwell J."/>
            <person name="Southard S.B."/>
            <person name="Horenstein C.I."/>
            <person name="Chen-Weiner J."/>
            <person name="Ram A.F.J."/>
            <person name="Kapteyn J.C."/>
            <person name="Roemer T.W."/>
            <person name="Vo D.H."/>
            <person name="Bondoc D.C."/>
            <person name="Hall J."/>
            <person name="Zhong W.-W."/>
            <person name="Sdicu A.-M."/>
            <person name="Davies J."/>
            <person name="Klis F.M."/>
            <person name="Robbins P.W."/>
            <person name="Bussey H."/>
        </authorList>
    </citation>
    <scope>IDENTIFICATION</scope>
</reference>
<reference key="6">
    <citation type="journal article" date="2003" name="Nature">
        <title>Global analysis of protein expression in yeast.</title>
        <authorList>
            <person name="Ghaemmaghami S."/>
            <person name="Huh W.-K."/>
            <person name="Bower K."/>
            <person name="Howson R.W."/>
            <person name="Belle A."/>
            <person name="Dephoure N."/>
            <person name="O'Shea E.K."/>
            <person name="Weissman J.S."/>
        </authorList>
    </citation>
    <scope>LEVEL OF PROTEIN EXPRESSION [LARGE SCALE ANALYSIS]</scope>
</reference>